<keyword id="KW-0997">Cell inner membrane</keyword>
<keyword id="KW-1003">Cell membrane</keyword>
<keyword id="KW-0406">Ion transport</keyword>
<keyword id="KW-0472">Membrane</keyword>
<keyword id="KW-0630">Potassium</keyword>
<keyword id="KW-0633">Potassium transport</keyword>
<keyword id="KW-0769">Symport</keyword>
<keyword id="KW-0812">Transmembrane</keyword>
<keyword id="KW-1133">Transmembrane helix</keyword>
<keyword id="KW-0813">Transport</keyword>
<dbReference type="EMBL" id="CP001048">
    <property type="protein sequence ID" value="ACC91108.1"/>
    <property type="molecule type" value="Genomic_DNA"/>
</dbReference>
<dbReference type="RefSeq" id="WP_011191440.1">
    <property type="nucleotide sequence ID" value="NZ_CP009780.1"/>
</dbReference>
<dbReference type="GeneID" id="49788031"/>
<dbReference type="KEGG" id="ypb:YPTS_4165"/>
<dbReference type="PATRIC" id="fig|502801.10.peg.3636"/>
<dbReference type="GO" id="GO:0005886">
    <property type="term" value="C:plasma membrane"/>
    <property type="evidence" value="ECO:0007669"/>
    <property type="project" value="UniProtKB-SubCell"/>
</dbReference>
<dbReference type="GO" id="GO:0015079">
    <property type="term" value="F:potassium ion transmembrane transporter activity"/>
    <property type="evidence" value="ECO:0007669"/>
    <property type="project" value="UniProtKB-UniRule"/>
</dbReference>
<dbReference type="GO" id="GO:0015293">
    <property type="term" value="F:symporter activity"/>
    <property type="evidence" value="ECO:0007669"/>
    <property type="project" value="UniProtKB-UniRule"/>
</dbReference>
<dbReference type="HAMAP" id="MF_01522">
    <property type="entry name" value="Kup"/>
    <property type="match status" value="1"/>
</dbReference>
<dbReference type="InterPro" id="IPR003855">
    <property type="entry name" value="K+_transporter"/>
</dbReference>
<dbReference type="InterPro" id="IPR053952">
    <property type="entry name" value="K_trans_C"/>
</dbReference>
<dbReference type="InterPro" id="IPR053951">
    <property type="entry name" value="K_trans_N"/>
</dbReference>
<dbReference type="InterPro" id="IPR023051">
    <property type="entry name" value="Kup"/>
</dbReference>
<dbReference type="NCBIfam" id="TIGR00794">
    <property type="entry name" value="kup"/>
    <property type="match status" value="1"/>
</dbReference>
<dbReference type="NCBIfam" id="NF008015">
    <property type="entry name" value="PRK10745.1"/>
    <property type="match status" value="1"/>
</dbReference>
<dbReference type="PANTHER" id="PTHR30540:SF79">
    <property type="entry name" value="LOW AFFINITY POTASSIUM TRANSPORT SYSTEM PROTEIN KUP"/>
    <property type="match status" value="1"/>
</dbReference>
<dbReference type="PANTHER" id="PTHR30540">
    <property type="entry name" value="OSMOTIC STRESS POTASSIUM TRANSPORTER"/>
    <property type="match status" value="1"/>
</dbReference>
<dbReference type="Pfam" id="PF02705">
    <property type="entry name" value="K_trans"/>
    <property type="match status" value="1"/>
</dbReference>
<dbReference type="Pfam" id="PF22776">
    <property type="entry name" value="K_trans_C"/>
    <property type="match status" value="1"/>
</dbReference>
<proteinExistence type="inferred from homology"/>
<gene>
    <name evidence="1" type="primary">kup</name>
    <name type="ordered locus">YPTS_4165</name>
</gene>
<comment type="function">
    <text evidence="1">Responsible for the low-affinity transport of potassium into the cell. Likely operates as a K(+):H(+) symporter.</text>
</comment>
<comment type="catalytic activity">
    <reaction evidence="1">
        <text>K(+)(in) + H(+)(in) = K(+)(out) + H(+)(out)</text>
        <dbReference type="Rhea" id="RHEA:28490"/>
        <dbReference type="ChEBI" id="CHEBI:15378"/>
        <dbReference type="ChEBI" id="CHEBI:29103"/>
    </reaction>
    <physiologicalReaction direction="right-to-left" evidence="1">
        <dbReference type="Rhea" id="RHEA:28492"/>
    </physiologicalReaction>
</comment>
<comment type="subcellular location">
    <subcellularLocation>
        <location evidence="1">Cell inner membrane</location>
        <topology evidence="1">Multi-pass membrane protein</topology>
    </subcellularLocation>
</comment>
<comment type="similarity">
    <text evidence="1">Belongs to the HAK/KUP transporter (TC 2.A.72) family.</text>
</comment>
<sequence length="622" mass="69012">MSTEHKQSLSAVTLAAIGVVYGDIGTSPLYTLRECFSGHYGFDVRPDVVFGFLSLIFWMLILVVSVKYLTYVMRADNAGEGGILTLMSLAGRNTSSRATSILVVLGLIGGSFFYGEVVITPAISVMSAIEGLEIAAPALDPYIVPCSIAVLTLLFVIQKHGTGSVGKLFAPVMLVWFLTLALLGLRSIIANPEVLAALNPKWAISFFVEYKSVSFFALGAVVLAITGVEALYADMGHFGKFPIRLAWFTVVLPSLVLNYFGQGALLLKNPEAIKNPFFLLAPDWALIPLLILATLATVIASQAVISGVFSLTRQAVRLGYLPPMRIIHTSEMESGQIYIPVINWTLYLAVVLVIIGFERSSNLAAAYGIAVTGTMVITSILFCTVAWKNWHWNRFLVAFLLMVLLIIDIPMFSANVLKLFSGGWLPLSLGLVMFIIMTTWKSERFSLLRRMHEHSNSLEAMIASLEKSPPVRVPGTAVYMSRAMNVIPFALLHNLKHNKVLHERVVLLTMRTDDVPYVHNVERVTIEQLSPTFWRVVARYGWRETPNVAEIFHRCGLEGLSCQMMETSFFMSHESLILTKRPWHLFLRGKLFIALSRNALRAPDQFEIPPNRVIELGTQVEI</sequence>
<name>KUP_YERPB</name>
<evidence type="ECO:0000255" key="1">
    <source>
        <dbReference type="HAMAP-Rule" id="MF_01522"/>
    </source>
</evidence>
<feature type="chain" id="PRO_1000190289" description="Low affinity potassium transport system protein Kup">
    <location>
        <begin position="1"/>
        <end position="622"/>
    </location>
</feature>
<feature type="transmembrane region" description="Helical" evidence="1">
    <location>
        <begin position="9"/>
        <end position="29"/>
    </location>
</feature>
<feature type="transmembrane region" description="Helical" evidence="1">
    <location>
        <begin position="46"/>
        <end position="66"/>
    </location>
</feature>
<feature type="transmembrane region" description="Helical" evidence="1">
    <location>
        <begin position="101"/>
        <end position="121"/>
    </location>
</feature>
<feature type="transmembrane region" description="Helical" evidence="1">
    <location>
        <begin position="137"/>
        <end position="157"/>
    </location>
</feature>
<feature type="transmembrane region" description="Helical" evidence="1">
    <location>
        <begin position="165"/>
        <end position="185"/>
    </location>
</feature>
<feature type="transmembrane region" description="Helical" evidence="1">
    <location>
        <begin position="213"/>
        <end position="233"/>
    </location>
</feature>
<feature type="transmembrane region" description="Helical" evidence="1">
    <location>
        <begin position="247"/>
        <end position="267"/>
    </location>
</feature>
<feature type="transmembrane region" description="Helical" evidence="1">
    <location>
        <begin position="276"/>
        <end position="296"/>
    </location>
</feature>
<feature type="transmembrane region" description="Helical" evidence="1">
    <location>
        <begin position="337"/>
        <end position="357"/>
    </location>
</feature>
<feature type="transmembrane region" description="Helical" evidence="1">
    <location>
        <begin position="363"/>
        <end position="383"/>
    </location>
</feature>
<feature type="transmembrane region" description="Helical" evidence="1">
    <location>
        <begin position="395"/>
        <end position="415"/>
    </location>
</feature>
<feature type="transmembrane region" description="Helical" evidence="1">
    <location>
        <begin position="416"/>
        <end position="436"/>
    </location>
</feature>
<accession>B2K7I6</accession>
<reference key="1">
    <citation type="submission" date="2008-04" db="EMBL/GenBank/DDBJ databases">
        <title>Complete sequence of Yersinia pseudotuberculosis PB1/+.</title>
        <authorList>
            <person name="Copeland A."/>
            <person name="Lucas S."/>
            <person name="Lapidus A."/>
            <person name="Glavina del Rio T."/>
            <person name="Dalin E."/>
            <person name="Tice H."/>
            <person name="Bruce D."/>
            <person name="Goodwin L."/>
            <person name="Pitluck S."/>
            <person name="Munk A.C."/>
            <person name="Brettin T."/>
            <person name="Detter J.C."/>
            <person name="Han C."/>
            <person name="Tapia R."/>
            <person name="Schmutz J."/>
            <person name="Larimer F."/>
            <person name="Land M."/>
            <person name="Hauser L."/>
            <person name="Challacombe J.F."/>
            <person name="Green L."/>
            <person name="Lindler L.E."/>
            <person name="Nikolich M.P."/>
            <person name="Richardson P."/>
        </authorList>
    </citation>
    <scope>NUCLEOTIDE SEQUENCE [LARGE SCALE GENOMIC DNA]</scope>
    <source>
        <strain>PB1/+</strain>
    </source>
</reference>
<protein>
    <recommendedName>
        <fullName evidence="1">Low affinity potassium transport system protein Kup</fullName>
    </recommendedName>
    <alternativeName>
        <fullName evidence="1">Kup system potassium uptake protein</fullName>
    </alternativeName>
</protein>
<organism>
    <name type="scientific">Yersinia pseudotuberculosis serotype IB (strain PB1/+)</name>
    <dbReference type="NCBI Taxonomy" id="502801"/>
    <lineage>
        <taxon>Bacteria</taxon>
        <taxon>Pseudomonadati</taxon>
        <taxon>Pseudomonadota</taxon>
        <taxon>Gammaproteobacteria</taxon>
        <taxon>Enterobacterales</taxon>
        <taxon>Yersiniaceae</taxon>
        <taxon>Yersinia</taxon>
    </lineage>
</organism>